<sequence length="247" mass="27633">MHLLALHLLLFLLGSRAKAGEIIGGTECKPHSRPYMAYLEIATSKNYLSTCSGFLIRRNFVLTAAHCSGRSITVLLGAHNKTAKEDTWQKIEVEKQFPHPKYDDYSVLHDIMLLKLKEKAKLTLAVGTLPLPAKFSFIPPGRVCRAVGWGKTNVNEPTSDTLQEVKMRLLEAEGCKHFTNFYHSSQLCVGNPKKMQNVYKGDSGGPLLCAGIAQGIASYVRRNARPPAVFTRISHYRPWINKILREN</sequence>
<dbReference type="EC" id="3.4.21.-"/>
<dbReference type="EMBL" id="D45174">
    <property type="protein sequence ID" value="BAA08122.1"/>
    <property type="molecule type" value="mRNA"/>
</dbReference>
<dbReference type="PIR" id="S64708">
    <property type="entry name" value="S64708"/>
</dbReference>
<dbReference type="SMR" id="P50341"/>
<dbReference type="MEROPS" id="S01.150"/>
<dbReference type="GO" id="GO:0005737">
    <property type="term" value="C:cytoplasm"/>
    <property type="evidence" value="ECO:0007669"/>
    <property type="project" value="TreeGrafter"/>
</dbReference>
<dbReference type="GO" id="GO:0005615">
    <property type="term" value="C:extracellular space"/>
    <property type="evidence" value="ECO:0007669"/>
    <property type="project" value="TreeGrafter"/>
</dbReference>
<dbReference type="GO" id="GO:0043231">
    <property type="term" value="C:intracellular membrane-bounded organelle"/>
    <property type="evidence" value="ECO:0007669"/>
    <property type="project" value="TreeGrafter"/>
</dbReference>
<dbReference type="GO" id="GO:0004252">
    <property type="term" value="F:serine-type endopeptidase activity"/>
    <property type="evidence" value="ECO:0007669"/>
    <property type="project" value="InterPro"/>
</dbReference>
<dbReference type="GO" id="GO:0006508">
    <property type="term" value="P:proteolysis"/>
    <property type="evidence" value="ECO:0007669"/>
    <property type="project" value="UniProtKB-KW"/>
</dbReference>
<dbReference type="CDD" id="cd00190">
    <property type="entry name" value="Tryp_SPc"/>
    <property type="match status" value="1"/>
</dbReference>
<dbReference type="FunFam" id="2.40.10.10:FF:000014">
    <property type="entry name" value="Complement factor D"/>
    <property type="match status" value="1"/>
</dbReference>
<dbReference type="FunFam" id="2.40.10.10:FF:000005">
    <property type="entry name" value="Serine protease 37"/>
    <property type="match status" value="1"/>
</dbReference>
<dbReference type="Gene3D" id="2.40.10.10">
    <property type="entry name" value="Trypsin-like serine proteases"/>
    <property type="match status" value="2"/>
</dbReference>
<dbReference type="InterPro" id="IPR009003">
    <property type="entry name" value="Peptidase_S1_PA"/>
</dbReference>
<dbReference type="InterPro" id="IPR043504">
    <property type="entry name" value="Peptidase_S1_PA_chymotrypsin"/>
</dbReference>
<dbReference type="InterPro" id="IPR001314">
    <property type="entry name" value="Peptidase_S1A"/>
</dbReference>
<dbReference type="InterPro" id="IPR001254">
    <property type="entry name" value="Trypsin_dom"/>
</dbReference>
<dbReference type="InterPro" id="IPR018114">
    <property type="entry name" value="TRYPSIN_HIS"/>
</dbReference>
<dbReference type="InterPro" id="IPR033116">
    <property type="entry name" value="TRYPSIN_SER"/>
</dbReference>
<dbReference type="PANTHER" id="PTHR24271:SF24">
    <property type="entry name" value="CHYMASE"/>
    <property type="match status" value="1"/>
</dbReference>
<dbReference type="PANTHER" id="PTHR24271">
    <property type="entry name" value="KALLIKREIN-RELATED"/>
    <property type="match status" value="1"/>
</dbReference>
<dbReference type="Pfam" id="PF00089">
    <property type="entry name" value="Trypsin"/>
    <property type="match status" value="1"/>
</dbReference>
<dbReference type="PRINTS" id="PR00722">
    <property type="entry name" value="CHYMOTRYPSIN"/>
</dbReference>
<dbReference type="SMART" id="SM00020">
    <property type="entry name" value="Tryp_SPc"/>
    <property type="match status" value="1"/>
</dbReference>
<dbReference type="SUPFAM" id="SSF50494">
    <property type="entry name" value="Trypsin-like serine proteases"/>
    <property type="match status" value="1"/>
</dbReference>
<dbReference type="PROSITE" id="PS50240">
    <property type="entry name" value="TRYPSIN_DOM"/>
    <property type="match status" value="1"/>
</dbReference>
<dbReference type="PROSITE" id="PS00134">
    <property type="entry name" value="TRYPSIN_HIS"/>
    <property type="match status" value="1"/>
</dbReference>
<dbReference type="PROSITE" id="PS00135">
    <property type="entry name" value="TRYPSIN_SER"/>
    <property type="match status" value="1"/>
</dbReference>
<accession>P50341</accession>
<feature type="signal peptide" evidence="2">
    <location>
        <begin position="1"/>
        <end position="19"/>
    </location>
</feature>
<feature type="propeptide" id="PRO_0000027465" description="Activation peptide" evidence="1">
    <location>
        <begin position="20"/>
        <end position="21"/>
    </location>
</feature>
<feature type="chain" id="PRO_0000027466" description="Mast cell protease 2">
    <location>
        <begin position="22"/>
        <end position="247"/>
    </location>
</feature>
<feature type="domain" description="Peptidase S1" evidence="3">
    <location>
        <begin position="22"/>
        <end position="245"/>
    </location>
</feature>
<feature type="active site" description="Charge relay system" evidence="1">
    <location>
        <position position="66"/>
    </location>
</feature>
<feature type="active site" description="Charge relay system" evidence="1">
    <location>
        <position position="110"/>
    </location>
</feature>
<feature type="active site" description="Charge relay system" evidence="1">
    <location>
        <position position="203"/>
    </location>
</feature>
<feature type="glycosylation site" description="N-linked (GlcNAc...) asparagine" evidence="2">
    <location>
        <position position="80"/>
    </location>
</feature>
<feature type="disulfide bond" evidence="3">
    <location>
        <begin position="51"/>
        <end position="67"/>
    </location>
</feature>
<feature type="disulfide bond" evidence="3">
    <location>
        <begin position="144"/>
        <end position="209"/>
    </location>
</feature>
<feature type="disulfide bond" evidence="3">
    <location>
        <begin position="175"/>
        <end position="188"/>
    </location>
</feature>
<proteinExistence type="evidence at transcript level"/>
<name>MCPT2_MERUN</name>
<protein>
    <recommendedName>
        <fullName>Mast cell protease 2</fullName>
        <ecNumber>3.4.21.-</ecNumber>
    </recommendedName>
</protein>
<organism>
    <name type="scientific">Meriones unguiculatus</name>
    <name type="common">Mongolian jird</name>
    <name type="synonym">Gerbillus unguiculatus</name>
    <dbReference type="NCBI Taxonomy" id="10047"/>
    <lineage>
        <taxon>Eukaryota</taxon>
        <taxon>Metazoa</taxon>
        <taxon>Chordata</taxon>
        <taxon>Craniata</taxon>
        <taxon>Vertebrata</taxon>
        <taxon>Euteleostomi</taxon>
        <taxon>Mammalia</taxon>
        <taxon>Eutheria</taxon>
        <taxon>Euarchontoglires</taxon>
        <taxon>Glires</taxon>
        <taxon>Rodentia</taxon>
        <taxon>Myomorpha</taxon>
        <taxon>Muroidea</taxon>
        <taxon>Muridae</taxon>
        <taxon>Gerbillinae</taxon>
        <taxon>Meriones</taxon>
    </lineage>
</organism>
<evidence type="ECO:0000250" key="1"/>
<evidence type="ECO:0000255" key="2"/>
<evidence type="ECO:0000255" key="3">
    <source>
        <dbReference type="PROSITE-ProRule" id="PRU00274"/>
    </source>
</evidence>
<reference key="1">
    <citation type="journal article" date="1996" name="Biochem. J.">
        <title>Cloning of the cDNAs for mast-cell chymases from the jejunum of Mongolian gerbils, Meriones unguiculatus, and their sequence similarities with chymases expressed in the connective-tissue mast cells of mice and rats.</title>
        <authorList>
            <person name="Itoh H."/>
            <person name="Murakumo Y."/>
            <person name="Tomita M."/>
            <person name="Ide H."/>
            <person name="Kobayashi T."/>
            <person name="Maruyama H."/>
            <person name="Horii Y."/>
            <person name="Nawa Y."/>
        </authorList>
    </citation>
    <scope>NUCLEOTIDE SEQUENCE [MRNA]</scope>
    <source>
        <strain>MGS/SEA</strain>
        <tissue>Intestine</tissue>
    </source>
</reference>
<keyword id="KW-1015">Disulfide bond</keyword>
<keyword id="KW-0325">Glycoprotein</keyword>
<keyword id="KW-0378">Hydrolase</keyword>
<keyword id="KW-0645">Protease</keyword>
<keyword id="KW-0720">Serine protease</keyword>
<keyword id="KW-0732">Signal</keyword>
<keyword id="KW-0865">Zymogen</keyword>
<comment type="similarity">
    <text evidence="3">Belongs to the peptidase S1 family. Granzyme subfamily.</text>
</comment>